<proteinExistence type="inferred from homology"/>
<protein>
    <recommendedName>
        <fullName evidence="1">Tryptophan--tRNA ligase</fullName>
        <ecNumber evidence="1">6.1.1.2</ecNumber>
    </recommendedName>
    <alternativeName>
        <fullName evidence="1">Tryptophanyl-tRNA synthetase</fullName>
        <shortName evidence="1">TrpRS</shortName>
    </alternativeName>
</protein>
<keyword id="KW-0030">Aminoacyl-tRNA synthetase</keyword>
<keyword id="KW-0067">ATP-binding</keyword>
<keyword id="KW-0963">Cytoplasm</keyword>
<keyword id="KW-0436">Ligase</keyword>
<keyword id="KW-0547">Nucleotide-binding</keyword>
<keyword id="KW-0648">Protein biosynthesis</keyword>
<reference key="1">
    <citation type="journal article" date="2005" name="J. Bacteriol.">
        <title>Insights on evolution of virulence and resistance from the complete genome analysis of an early methicillin-resistant Staphylococcus aureus strain and a biofilm-producing methicillin-resistant Staphylococcus epidermidis strain.</title>
        <authorList>
            <person name="Gill S.R."/>
            <person name="Fouts D.E."/>
            <person name="Archer G.L."/>
            <person name="Mongodin E.F."/>
            <person name="DeBoy R.T."/>
            <person name="Ravel J."/>
            <person name="Paulsen I.T."/>
            <person name="Kolonay J.F."/>
            <person name="Brinkac L.M."/>
            <person name="Beanan M.J."/>
            <person name="Dodson R.J."/>
            <person name="Daugherty S.C."/>
            <person name="Madupu R."/>
            <person name="Angiuoli S.V."/>
            <person name="Durkin A.S."/>
            <person name="Haft D.H."/>
            <person name="Vamathevan J.J."/>
            <person name="Khouri H."/>
            <person name="Utterback T.R."/>
            <person name="Lee C."/>
            <person name="Dimitrov G."/>
            <person name="Jiang L."/>
            <person name="Qin H."/>
            <person name="Weidman J."/>
            <person name="Tran K."/>
            <person name="Kang K.H."/>
            <person name="Hance I.R."/>
            <person name="Nelson K.E."/>
            <person name="Fraser C.M."/>
        </authorList>
    </citation>
    <scope>NUCLEOTIDE SEQUENCE [LARGE SCALE GENOMIC DNA]</scope>
    <source>
        <strain>COL</strain>
    </source>
</reference>
<gene>
    <name evidence="1" type="primary">trpS</name>
    <name type="ordered locus">SACOL1001</name>
</gene>
<name>SYW_STAAC</name>
<sequence length="329" mass="36909">METLFSGIQPSGIPTIGNYIGALKQFVDVQNDYDCYFCIVDQHAITMPQDRLKLRKQTRQLAAIYLASGIDPDKATLFIQSEVPAHVQAGWMLTTIASVGELERMTQYKDKAQKAVEGIPAGLLTYPPLMAADIVLYNTNIVPVGDDQKQHIELTRNLVDRFNSRYNDVLVKPEIRMPKVGGRVMSLQDPTRKMSKSDDNAKNFISLLDEPNVAAKKIKSAVTDSDGIIKFDRDNKPGITNLISIYAGLTDMPIKDIEAKYEGEGYGKFKGDLAEIVKAFLVEFQEKYESFYNSDKLDDILDQGRDKAHKVSFKTVKKMEKAMGLGRKR</sequence>
<comment type="function">
    <text evidence="1">Catalyzes the attachment of tryptophan to tRNA(Trp).</text>
</comment>
<comment type="catalytic activity">
    <reaction evidence="1">
        <text>tRNA(Trp) + L-tryptophan + ATP = L-tryptophyl-tRNA(Trp) + AMP + diphosphate + H(+)</text>
        <dbReference type="Rhea" id="RHEA:24080"/>
        <dbReference type="Rhea" id="RHEA-COMP:9671"/>
        <dbReference type="Rhea" id="RHEA-COMP:9705"/>
        <dbReference type="ChEBI" id="CHEBI:15378"/>
        <dbReference type="ChEBI" id="CHEBI:30616"/>
        <dbReference type="ChEBI" id="CHEBI:33019"/>
        <dbReference type="ChEBI" id="CHEBI:57912"/>
        <dbReference type="ChEBI" id="CHEBI:78442"/>
        <dbReference type="ChEBI" id="CHEBI:78535"/>
        <dbReference type="ChEBI" id="CHEBI:456215"/>
        <dbReference type="EC" id="6.1.1.2"/>
    </reaction>
</comment>
<comment type="subunit">
    <text evidence="1">Homodimer.</text>
</comment>
<comment type="subcellular location">
    <subcellularLocation>
        <location evidence="1">Cytoplasm</location>
    </subcellularLocation>
</comment>
<comment type="similarity">
    <text evidence="1">Belongs to the class-I aminoacyl-tRNA synthetase family.</text>
</comment>
<accession>Q5HH88</accession>
<organism>
    <name type="scientific">Staphylococcus aureus (strain COL)</name>
    <dbReference type="NCBI Taxonomy" id="93062"/>
    <lineage>
        <taxon>Bacteria</taxon>
        <taxon>Bacillati</taxon>
        <taxon>Bacillota</taxon>
        <taxon>Bacilli</taxon>
        <taxon>Bacillales</taxon>
        <taxon>Staphylococcaceae</taxon>
        <taxon>Staphylococcus</taxon>
    </lineage>
</organism>
<feature type="chain" id="PRO_0000136675" description="Tryptophan--tRNA ligase">
    <location>
        <begin position="1"/>
        <end position="329"/>
    </location>
</feature>
<feature type="short sequence motif" description="'HIGH' region" evidence="1">
    <location>
        <begin position="10"/>
        <end position="18"/>
    </location>
</feature>
<feature type="short sequence motif" description="'KMSKS' region" evidence="1">
    <location>
        <begin position="193"/>
        <end position="197"/>
    </location>
</feature>
<feature type="binding site" evidence="1">
    <location>
        <begin position="9"/>
        <end position="11"/>
    </location>
    <ligand>
        <name>ATP</name>
        <dbReference type="ChEBI" id="CHEBI:30616"/>
    </ligand>
</feature>
<feature type="binding site" evidence="1">
    <location>
        <begin position="17"/>
        <end position="18"/>
    </location>
    <ligand>
        <name>ATP</name>
        <dbReference type="ChEBI" id="CHEBI:30616"/>
    </ligand>
</feature>
<feature type="binding site" evidence="1">
    <location>
        <position position="133"/>
    </location>
    <ligand>
        <name>L-tryptophan</name>
        <dbReference type="ChEBI" id="CHEBI:57912"/>
    </ligand>
</feature>
<feature type="binding site" evidence="1">
    <location>
        <begin position="145"/>
        <end position="147"/>
    </location>
    <ligand>
        <name>ATP</name>
        <dbReference type="ChEBI" id="CHEBI:30616"/>
    </ligand>
</feature>
<feature type="binding site" evidence="1">
    <location>
        <position position="184"/>
    </location>
    <ligand>
        <name>ATP</name>
        <dbReference type="ChEBI" id="CHEBI:30616"/>
    </ligand>
</feature>
<feature type="binding site" evidence="1">
    <location>
        <begin position="193"/>
        <end position="197"/>
    </location>
    <ligand>
        <name>ATP</name>
        <dbReference type="ChEBI" id="CHEBI:30616"/>
    </ligand>
</feature>
<dbReference type="EC" id="6.1.1.2" evidence="1"/>
<dbReference type="EMBL" id="CP000046">
    <property type="protein sequence ID" value="AAW36469.1"/>
    <property type="molecule type" value="Genomic_DNA"/>
</dbReference>
<dbReference type="RefSeq" id="WP_000448934.1">
    <property type="nucleotide sequence ID" value="NZ_JBGOFO010000002.1"/>
</dbReference>
<dbReference type="SMR" id="Q5HH88"/>
<dbReference type="KEGG" id="sac:SACOL1001"/>
<dbReference type="HOGENOM" id="CLU_029244_1_1_9"/>
<dbReference type="Proteomes" id="UP000000530">
    <property type="component" value="Chromosome"/>
</dbReference>
<dbReference type="GO" id="GO:0005829">
    <property type="term" value="C:cytosol"/>
    <property type="evidence" value="ECO:0007669"/>
    <property type="project" value="TreeGrafter"/>
</dbReference>
<dbReference type="GO" id="GO:0005524">
    <property type="term" value="F:ATP binding"/>
    <property type="evidence" value="ECO:0007669"/>
    <property type="project" value="UniProtKB-UniRule"/>
</dbReference>
<dbReference type="GO" id="GO:0004830">
    <property type="term" value="F:tryptophan-tRNA ligase activity"/>
    <property type="evidence" value="ECO:0007669"/>
    <property type="project" value="UniProtKB-UniRule"/>
</dbReference>
<dbReference type="GO" id="GO:0006436">
    <property type="term" value="P:tryptophanyl-tRNA aminoacylation"/>
    <property type="evidence" value="ECO:0007669"/>
    <property type="project" value="UniProtKB-UniRule"/>
</dbReference>
<dbReference type="CDD" id="cd00806">
    <property type="entry name" value="TrpRS_core"/>
    <property type="match status" value="1"/>
</dbReference>
<dbReference type="FunFam" id="1.10.240.10:FF:000002">
    <property type="entry name" value="Tryptophan--tRNA ligase"/>
    <property type="match status" value="1"/>
</dbReference>
<dbReference type="Gene3D" id="3.40.50.620">
    <property type="entry name" value="HUPs"/>
    <property type="match status" value="1"/>
</dbReference>
<dbReference type="Gene3D" id="1.10.240.10">
    <property type="entry name" value="Tyrosyl-Transfer RNA Synthetase"/>
    <property type="match status" value="1"/>
</dbReference>
<dbReference type="HAMAP" id="MF_00140_B">
    <property type="entry name" value="Trp_tRNA_synth_B"/>
    <property type="match status" value="1"/>
</dbReference>
<dbReference type="InterPro" id="IPR001412">
    <property type="entry name" value="aa-tRNA-synth_I_CS"/>
</dbReference>
<dbReference type="InterPro" id="IPR002305">
    <property type="entry name" value="aa-tRNA-synth_Ic"/>
</dbReference>
<dbReference type="InterPro" id="IPR014729">
    <property type="entry name" value="Rossmann-like_a/b/a_fold"/>
</dbReference>
<dbReference type="InterPro" id="IPR002306">
    <property type="entry name" value="Trp-tRNA-ligase"/>
</dbReference>
<dbReference type="InterPro" id="IPR024109">
    <property type="entry name" value="Trp-tRNA-ligase_bac-type"/>
</dbReference>
<dbReference type="InterPro" id="IPR050203">
    <property type="entry name" value="Trp-tRNA_synthetase"/>
</dbReference>
<dbReference type="NCBIfam" id="TIGR00233">
    <property type="entry name" value="trpS"/>
    <property type="match status" value="1"/>
</dbReference>
<dbReference type="PANTHER" id="PTHR43766">
    <property type="entry name" value="TRYPTOPHAN--TRNA LIGASE, MITOCHONDRIAL"/>
    <property type="match status" value="1"/>
</dbReference>
<dbReference type="PANTHER" id="PTHR43766:SF1">
    <property type="entry name" value="TRYPTOPHAN--TRNA LIGASE, MITOCHONDRIAL"/>
    <property type="match status" value="1"/>
</dbReference>
<dbReference type="Pfam" id="PF00579">
    <property type="entry name" value="tRNA-synt_1b"/>
    <property type="match status" value="1"/>
</dbReference>
<dbReference type="PRINTS" id="PR01039">
    <property type="entry name" value="TRNASYNTHTRP"/>
</dbReference>
<dbReference type="SUPFAM" id="SSF52374">
    <property type="entry name" value="Nucleotidylyl transferase"/>
    <property type="match status" value="1"/>
</dbReference>
<dbReference type="PROSITE" id="PS00178">
    <property type="entry name" value="AA_TRNA_LIGASE_I"/>
    <property type="match status" value="1"/>
</dbReference>
<evidence type="ECO:0000255" key="1">
    <source>
        <dbReference type="HAMAP-Rule" id="MF_00140"/>
    </source>
</evidence>